<protein>
    <recommendedName>
        <fullName evidence="1">Probable GTP-binding protein EngB</fullName>
    </recommendedName>
</protein>
<feature type="chain" id="PRO_0000266906" description="Probable GTP-binding protein EngB">
    <location>
        <begin position="1"/>
        <end position="200"/>
    </location>
</feature>
<feature type="domain" description="EngB-type G" evidence="1">
    <location>
        <begin position="24"/>
        <end position="198"/>
    </location>
</feature>
<feature type="binding site" evidence="1">
    <location>
        <begin position="32"/>
        <end position="39"/>
    </location>
    <ligand>
        <name>GTP</name>
        <dbReference type="ChEBI" id="CHEBI:37565"/>
    </ligand>
</feature>
<feature type="binding site" evidence="1">
    <location>
        <position position="39"/>
    </location>
    <ligand>
        <name>Mg(2+)</name>
        <dbReference type="ChEBI" id="CHEBI:18420"/>
    </ligand>
</feature>
<feature type="binding site" evidence="1">
    <location>
        <begin position="59"/>
        <end position="63"/>
    </location>
    <ligand>
        <name>GTP</name>
        <dbReference type="ChEBI" id="CHEBI:37565"/>
    </ligand>
</feature>
<feature type="binding site" evidence="1">
    <location>
        <position position="61"/>
    </location>
    <ligand>
        <name>Mg(2+)</name>
        <dbReference type="ChEBI" id="CHEBI:18420"/>
    </ligand>
</feature>
<feature type="binding site" evidence="1">
    <location>
        <begin position="77"/>
        <end position="80"/>
    </location>
    <ligand>
        <name>GTP</name>
        <dbReference type="ChEBI" id="CHEBI:37565"/>
    </ligand>
</feature>
<feature type="binding site" evidence="1">
    <location>
        <begin position="144"/>
        <end position="147"/>
    </location>
    <ligand>
        <name>GTP</name>
        <dbReference type="ChEBI" id="CHEBI:37565"/>
    </ligand>
</feature>
<feature type="binding site" evidence="1">
    <location>
        <begin position="177"/>
        <end position="179"/>
    </location>
    <ligand>
        <name>GTP</name>
        <dbReference type="ChEBI" id="CHEBI:37565"/>
    </ligand>
</feature>
<gene>
    <name evidence="1" type="primary">engB</name>
    <name type="ordered locus">Noc_0553</name>
</gene>
<sequence length="200" mass="22326">MNSLYRKAHYQGSAYTLSQLPPDEGMEVAFAGRSNVGKSSAINAITGIGGLARTSKTPGRTQMINFFQLDARRYLVDLPGYGYAKVPEAVKRQWQQTLSAYLEQRRALCGIVLVVDIRRLYQPFDLQMLEWCRSRGLPVRILLTKSDKLKRGAANQALQKATTHLQEVFPMARVQLFSAVNHTGIEAIQAQLDEWLGIGG</sequence>
<name>ENGB_NITOC</name>
<evidence type="ECO:0000255" key="1">
    <source>
        <dbReference type="HAMAP-Rule" id="MF_00321"/>
    </source>
</evidence>
<dbReference type="EMBL" id="CP000127">
    <property type="protein sequence ID" value="ABA57073.1"/>
    <property type="molecule type" value="Genomic_DNA"/>
</dbReference>
<dbReference type="SMR" id="Q3JDM3"/>
<dbReference type="FunCoup" id="Q3JDM3">
    <property type="interactions" value="387"/>
</dbReference>
<dbReference type="STRING" id="323261.Noc_0553"/>
<dbReference type="KEGG" id="noc:Noc_0553"/>
<dbReference type="eggNOG" id="COG0218">
    <property type="taxonomic scope" value="Bacteria"/>
</dbReference>
<dbReference type="HOGENOM" id="CLU_033732_1_0_6"/>
<dbReference type="InParanoid" id="Q3JDM3"/>
<dbReference type="Proteomes" id="UP000006838">
    <property type="component" value="Chromosome"/>
</dbReference>
<dbReference type="GO" id="GO:0005829">
    <property type="term" value="C:cytosol"/>
    <property type="evidence" value="ECO:0007669"/>
    <property type="project" value="TreeGrafter"/>
</dbReference>
<dbReference type="GO" id="GO:0005525">
    <property type="term" value="F:GTP binding"/>
    <property type="evidence" value="ECO:0007669"/>
    <property type="project" value="UniProtKB-UniRule"/>
</dbReference>
<dbReference type="GO" id="GO:0046872">
    <property type="term" value="F:metal ion binding"/>
    <property type="evidence" value="ECO:0007669"/>
    <property type="project" value="UniProtKB-KW"/>
</dbReference>
<dbReference type="GO" id="GO:0000917">
    <property type="term" value="P:division septum assembly"/>
    <property type="evidence" value="ECO:0007669"/>
    <property type="project" value="UniProtKB-KW"/>
</dbReference>
<dbReference type="CDD" id="cd01876">
    <property type="entry name" value="YihA_EngB"/>
    <property type="match status" value="1"/>
</dbReference>
<dbReference type="FunFam" id="3.40.50.300:FF:000098">
    <property type="entry name" value="Probable GTP-binding protein EngB"/>
    <property type="match status" value="1"/>
</dbReference>
<dbReference type="Gene3D" id="3.40.50.300">
    <property type="entry name" value="P-loop containing nucleotide triphosphate hydrolases"/>
    <property type="match status" value="1"/>
</dbReference>
<dbReference type="HAMAP" id="MF_00321">
    <property type="entry name" value="GTPase_EngB"/>
    <property type="match status" value="1"/>
</dbReference>
<dbReference type="InterPro" id="IPR030393">
    <property type="entry name" value="G_ENGB_dom"/>
</dbReference>
<dbReference type="InterPro" id="IPR006073">
    <property type="entry name" value="GTP-bd"/>
</dbReference>
<dbReference type="InterPro" id="IPR019987">
    <property type="entry name" value="GTP-bd_ribosome_bio_YsxC"/>
</dbReference>
<dbReference type="InterPro" id="IPR027417">
    <property type="entry name" value="P-loop_NTPase"/>
</dbReference>
<dbReference type="NCBIfam" id="TIGR03598">
    <property type="entry name" value="GTPase_YsxC"/>
    <property type="match status" value="1"/>
</dbReference>
<dbReference type="PANTHER" id="PTHR11649:SF13">
    <property type="entry name" value="ENGB-TYPE G DOMAIN-CONTAINING PROTEIN"/>
    <property type="match status" value="1"/>
</dbReference>
<dbReference type="PANTHER" id="PTHR11649">
    <property type="entry name" value="MSS1/TRME-RELATED GTP-BINDING PROTEIN"/>
    <property type="match status" value="1"/>
</dbReference>
<dbReference type="Pfam" id="PF01926">
    <property type="entry name" value="MMR_HSR1"/>
    <property type="match status" value="1"/>
</dbReference>
<dbReference type="SUPFAM" id="SSF52540">
    <property type="entry name" value="P-loop containing nucleoside triphosphate hydrolases"/>
    <property type="match status" value="1"/>
</dbReference>
<dbReference type="PROSITE" id="PS51706">
    <property type="entry name" value="G_ENGB"/>
    <property type="match status" value="1"/>
</dbReference>
<organism>
    <name type="scientific">Nitrosococcus oceani (strain ATCC 19707 / BCRC 17464 / JCM 30415 / NCIMB 11848 / C-107)</name>
    <dbReference type="NCBI Taxonomy" id="323261"/>
    <lineage>
        <taxon>Bacteria</taxon>
        <taxon>Pseudomonadati</taxon>
        <taxon>Pseudomonadota</taxon>
        <taxon>Gammaproteobacteria</taxon>
        <taxon>Chromatiales</taxon>
        <taxon>Chromatiaceae</taxon>
        <taxon>Nitrosococcus</taxon>
    </lineage>
</organism>
<accession>Q3JDM3</accession>
<proteinExistence type="inferred from homology"/>
<reference key="1">
    <citation type="journal article" date="2006" name="Appl. Environ. Microbiol.">
        <title>Complete genome sequence of the marine, chemolithoautotrophic, ammonia-oxidizing bacterium Nitrosococcus oceani ATCC 19707.</title>
        <authorList>
            <person name="Klotz M.G."/>
            <person name="Arp D.J."/>
            <person name="Chain P.S.G."/>
            <person name="El-Sheikh A.F."/>
            <person name="Hauser L.J."/>
            <person name="Hommes N.G."/>
            <person name="Larimer F.W."/>
            <person name="Malfatti S.A."/>
            <person name="Norton J.M."/>
            <person name="Poret-Peterson A.T."/>
            <person name="Vergez L.M."/>
            <person name="Ward B.B."/>
        </authorList>
    </citation>
    <scope>NUCLEOTIDE SEQUENCE [LARGE SCALE GENOMIC DNA]</scope>
    <source>
        <strain>ATCC 19707 / BCRC 17464 / JCM 30415 / NCIMB 11848 / C-107</strain>
    </source>
</reference>
<comment type="function">
    <text evidence="1">Necessary for normal cell division and for the maintenance of normal septation.</text>
</comment>
<comment type="cofactor">
    <cofactor evidence="1">
        <name>Mg(2+)</name>
        <dbReference type="ChEBI" id="CHEBI:18420"/>
    </cofactor>
</comment>
<comment type="similarity">
    <text evidence="1">Belongs to the TRAFAC class TrmE-Era-EngA-EngB-Septin-like GTPase superfamily. EngB GTPase family.</text>
</comment>
<keyword id="KW-0131">Cell cycle</keyword>
<keyword id="KW-0132">Cell division</keyword>
<keyword id="KW-0342">GTP-binding</keyword>
<keyword id="KW-0460">Magnesium</keyword>
<keyword id="KW-0479">Metal-binding</keyword>
<keyword id="KW-0547">Nucleotide-binding</keyword>
<keyword id="KW-1185">Reference proteome</keyword>
<keyword id="KW-0717">Septation</keyword>